<name>RS15_CHLTB</name>
<protein>
    <recommendedName>
        <fullName evidence="1">Small ribosomal subunit protein uS15</fullName>
    </recommendedName>
    <alternativeName>
        <fullName evidence="2">30S ribosomal protein S15</fullName>
    </alternativeName>
</protein>
<dbReference type="EMBL" id="AM884177">
    <property type="protein sequence ID" value="CAP06613.1"/>
    <property type="molecule type" value="Genomic_DNA"/>
</dbReference>
<dbReference type="RefSeq" id="WP_009872230.1">
    <property type="nucleotide sequence ID" value="NC_010280.2"/>
</dbReference>
<dbReference type="SMR" id="B0BAV1"/>
<dbReference type="GeneID" id="93065722"/>
<dbReference type="KEGG" id="ctl:CTLon_0215"/>
<dbReference type="HOGENOM" id="CLU_148518_0_0_0"/>
<dbReference type="Proteomes" id="UP001154401">
    <property type="component" value="Chromosome"/>
</dbReference>
<dbReference type="GO" id="GO:0022627">
    <property type="term" value="C:cytosolic small ribosomal subunit"/>
    <property type="evidence" value="ECO:0007669"/>
    <property type="project" value="TreeGrafter"/>
</dbReference>
<dbReference type="GO" id="GO:0019843">
    <property type="term" value="F:rRNA binding"/>
    <property type="evidence" value="ECO:0007669"/>
    <property type="project" value="UniProtKB-UniRule"/>
</dbReference>
<dbReference type="GO" id="GO:0003735">
    <property type="term" value="F:structural constituent of ribosome"/>
    <property type="evidence" value="ECO:0007669"/>
    <property type="project" value="InterPro"/>
</dbReference>
<dbReference type="GO" id="GO:0006412">
    <property type="term" value="P:translation"/>
    <property type="evidence" value="ECO:0007669"/>
    <property type="project" value="UniProtKB-UniRule"/>
</dbReference>
<dbReference type="CDD" id="cd00353">
    <property type="entry name" value="Ribosomal_S15p_S13e"/>
    <property type="match status" value="1"/>
</dbReference>
<dbReference type="FunFam" id="1.10.287.10:FF:000002">
    <property type="entry name" value="30S ribosomal protein S15"/>
    <property type="match status" value="1"/>
</dbReference>
<dbReference type="Gene3D" id="6.10.250.3130">
    <property type="match status" value="1"/>
</dbReference>
<dbReference type="Gene3D" id="1.10.287.10">
    <property type="entry name" value="S15/NS1, RNA-binding"/>
    <property type="match status" value="1"/>
</dbReference>
<dbReference type="HAMAP" id="MF_01343_B">
    <property type="entry name" value="Ribosomal_uS15_B"/>
    <property type="match status" value="1"/>
</dbReference>
<dbReference type="InterPro" id="IPR000589">
    <property type="entry name" value="Ribosomal_uS15"/>
</dbReference>
<dbReference type="InterPro" id="IPR005290">
    <property type="entry name" value="Ribosomal_uS15_bac-type"/>
</dbReference>
<dbReference type="InterPro" id="IPR009068">
    <property type="entry name" value="uS15_NS1_RNA-bd_sf"/>
</dbReference>
<dbReference type="NCBIfam" id="TIGR00952">
    <property type="entry name" value="S15_bact"/>
    <property type="match status" value="1"/>
</dbReference>
<dbReference type="PANTHER" id="PTHR23321">
    <property type="entry name" value="RIBOSOMAL PROTEIN S15, BACTERIAL AND ORGANELLAR"/>
    <property type="match status" value="1"/>
</dbReference>
<dbReference type="PANTHER" id="PTHR23321:SF26">
    <property type="entry name" value="SMALL RIBOSOMAL SUBUNIT PROTEIN US15M"/>
    <property type="match status" value="1"/>
</dbReference>
<dbReference type="Pfam" id="PF00312">
    <property type="entry name" value="Ribosomal_S15"/>
    <property type="match status" value="1"/>
</dbReference>
<dbReference type="SMART" id="SM01387">
    <property type="entry name" value="Ribosomal_S15"/>
    <property type="match status" value="1"/>
</dbReference>
<dbReference type="SUPFAM" id="SSF47060">
    <property type="entry name" value="S15/NS1 RNA-binding domain"/>
    <property type="match status" value="1"/>
</dbReference>
<dbReference type="PROSITE" id="PS00362">
    <property type="entry name" value="RIBOSOMAL_S15"/>
    <property type="match status" value="1"/>
</dbReference>
<reference key="1">
    <citation type="journal article" date="2008" name="Genome Res.">
        <title>Chlamydia trachomatis: genome sequence analysis of lymphogranuloma venereum isolates.</title>
        <authorList>
            <person name="Thomson N.R."/>
            <person name="Holden M.T.G."/>
            <person name="Carder C."/>
            <person name="Lennard N."/>
            <person name="Lockey S.J."/>
            <person name="Marsh P."/>
            <person name="Skipp P."/>
            <person name="O'Connor C.D."/>
            <person name="Goodhead I."/>
            <person name="Norbertzcak H."/>
            <person name="Harris B."/>
            <person name="Ormond D."/>
            <person name="Rance R."/>
            <person name="Quail M.A."/>
            <person name="Parkhill J."/>
            <person name="Stephens R.S."/>
            <person name="Clarke I.N."/>
        </authorList>
    </citation>
    <scope>NUCLEOTIDE SEQUENCE [LARGE SCALE GENOMIC DNA]</scope>
    <source>
        <strain>UCH-1/proctitis</strain>
    </source>
</reference>
<gene>
    <name evidence="1" type="primary">rpsO</name>
    <name type="ordered locus">CTLon_0215</name>
</gene>
<sequence length="89" mass="10400">MSLDKGTKEEITKKFQLHEKDTGSADVQIAILTEHITELKEHLKRSPKDQNSRLALLKLVGQRRKLLEYLNSTDTERYKNLIARLNLRK</sequence>
<evidence type="ECO:0000255" key="1">
    <source>
        <dbReference type="HAMAP-Rule" id="MF_01343"/>
    </source>
</evidence>
<evidence type="ECO:0000305" key="2"/>
<comment type="function">
    <text evidence="1">One of the primary rRNA binding proteins, it binds directly to 16S rRNA where it helps nucleate assembly of the platform of the 30S subunit by binding and bridging several RNA helices of the 16S rRNA.</text>
</comment>
<comment type="function">
    <text evidence="1">Forms an intersubunit bridge (bridge B4) with the 23S rRNA of the 50S subunit in the ribosome.</text>
</comment>
<comment type="subunit">
    <text evidence="1">Part of the 30S ribosomal subunit. Forms a bridge to the 50S subunit in the 70S ribosome, contacting the 23S rRNA.</text>
</comment>
<comment type="similarity">
    <text evidence="1">Belongs to the universal ribosomal protein uS15 family.</text>
</comment>
<proteinExistence type="inferred from homology"/>
<feature type="chain" id="PRO_1000143095" description="Small ribosomal subunit protein uS15">
    <location>
        <begin position="1"/>
        <end position="89"/>
    </location>
</feature>
<organism>
    <name type="scientific">Chlamydia trachomatis serovar L2b (strain UCH-1/proctitis)</name>
    <dbReference type="NCBI Taxonomy" id="471473"/>
    <lineage>
        <taxon>Bacteria</taxon>
        <taxon>Pseudomonadati</taxon>
        <taxon>Chlamydiota</taxon>
        <taxon>Chlamydiia</taxon>
        <taxon>Chlamydiales</taxon>
        <taxon>Chlamydiaceae</taxon>
        <taxon>Chlamydia/Chlamydophila group</taxon>
        <taxon>Chlamydia</taxon>
    </lineage>
</organism>
<accession>B0BAV1</accession>
<keyword id="KW-0687">Ribonucleoprotein</keyword>
<keyword id="KW-0689">Ribosomal protein</keyword>
<keyword id="KW-0694">RNA-binding</keyword>
<keyword id="KW-0699">rRNA-binding</keyword>